<reference key="1">
    <citation type="journal article" date="2005" name="Nature">
        <title>The genome of the social amoeba Dictyostelium discoideum.</title>
        <authorList>
            <person name="Eichinger L."/>
            <person name="Pachebat J.A."/>
            <person name="Gloeckner G."/>
            <person name="Rajandream M.A."/>
            <person name="Sucgang R."/>
            <person name="Berriman M."/>
            <person name="Song J."/>
            <person name="Olsen R."/>
            <person name="Szafranski K."/>
            <person name="Xu Q."/>
            <person name="Tunggal B."/>
            <person name="Kummerfeld S."/>
            <person name="Madera M."/>
            <person name="Konfortov B.A."/>
            <person name="Rivero F."/>
            <person name="Bankier A.T."/>
            <person name="Lehmann R."/>
            <person name="Hamlin N."/>
            <person name="Davies R."/>
            <person name="Gaudet P."/>
            <person name="Fey P."/>
            <person name="Pilcher K."/>
            <person name="Chen G."/>
            <person name="Saunders D."/>
            <person name="Sodergren E.J."/>
            <person name="Davis P."/>
            <person name="Kerhornou A."/>
            <person name="Nie X."/>
            <person name="Hall N."/>
            <person name="Anjard C."/>
            <person name="Hemphill L."/>
            <person name="Bason N."/>
            <person name="Farbrother P."/>
            <person name="Desany B."/>
            <person name="Just E."/>
            <person name="Morio T."/>
            <person name="Rost R."/>
            <person name="Churcher C.M."/>
            <person name="Cooper J."/>
            <person name="Haydock S."/>
            <person name="van Driessche N."/>
            <person name="Cronin A."/>
            <person name="Goodhead I."/>
            <person name="Muzny D.M."/>
            <person name="Mourier T."/>
            <person name="Pain A."/>
            <person name="Lu M."/>
            <person name="Harper D."/>
            <person name="Lindsay R."/>
            <person name="Hauser H."/>
            <person name="James K.D."/>
            <person name="Quiles M."/>
            <person name="Madan Babu M."/>
            <person name="Saito T."/>
            <person name="Buchrieser C."/>
            <person name="Wardroper A."/>
            <person name="Felder M."/>
            <person name="Thangavelu M."/>
            <person name="Johnson D."/>
            <person name="Knights A."/>
            <person name="Loulseged H."/>
            <person name="Mungall K.L."/>
            <person name="Oliver K."/>
            <person name="Price C."/>
            <person name="Quail M.A."/>
            <person name="Urushihara H."/>
            <person name="Hernandez J."/>
            <person name="Rabbinowitsch E."/>
            <person name="Steffen D."/>
            <person name="Sanders M."/>
            <person name="Ma J."/>
            <person name="Kohara Y."/>
            <person name="Sharp S."/>
            <person name="Simmonds M.N."/>
            <person name="Spiegler S."/>
            <person name="Tivey A."/>
            <person name="Sugano S."/>
            <person name="White B."/>
            <person name="Walker D."/>
            <person name="Woodward J.R."/>
            <person name="Winckler T."/>
            <person name="Tanaka Y."/>
            <person name="Shaulsky G."/>
            <person name="Schleicher M."/>
            <person name="Weinstock G.M."/>
            <person name="Rosenthal A."/>
            <person name="Cox E.C."/>
            <person name="Chisholm R.L."/>
            <person name="Gibbs R.A."/>
            <person name="Loomis W.F."/>
            <person name="Platzer M."/>
            <person name="Kay R.R."/>
            <person name="Williams J.G."/>
            <person name="Dear P.H."/>
            <person name="Noegel A.A."/>
            <person name="Barrell B.G."/>
            <person name="Kuspa A."/>
        </authorList>
    </citation>
    <scope>NUCLEOTIDE SEQUENCE [LARGE SCALE GENOMIC DNA]</scope>
    <source>
        <strain>AX4</strain>
    </source>
</reference>
<keyword id="KW-0325">Glycoprotein</keyword>
<keyword id="KW-0472">Membrane</keyword>
<keyword id="KW-1185">Reference proteome</keyword>
<keyword id="KW-0812">Transmembrane</keyword>
<keyword id="KW-1133">Transmembrane helix</keyword>
<name>TSPC_DICDI</name>
<feature type="chain" id="PRO_0000315598" description="Probable tetraspanin tspC">
    <location>
        <begin position="1"/>
        <end position="238"/>
    </location>
</feature>
<feature type="topological domain" description="Cytoplasmic" evidence="1">
    <location>
        <begin position="1"/>
        <end position="16"/>
    </location>
</feature>
<feature type="transmembrane region" description="Helical" evidence="1">
    <location>
        <begin position="17"/>
        <end position="37"/>
    </location>
</feature>
<feature type="topological domain" description="Extracellular" evidence="1">
    <location>
        <begin position="38"/>
        <end position="69"/>
    </location>
</feature>
<feature type="transmembrane region" description="Helical" evidence="1">
    <location>
        <begin position="70"/>
        <end position="90"/>
    </location>
</feature>
<feature type="topological domain" description="Cytoplasmic" evidence="1">
    <location>
        <begin position="91"/>
        <end position="93"/>
    </location>
</feature>
<feature type="transmembrane region" description="Helical" evidence="1">
    <location>
        <begin position="94"/>
        <end position="114"/>
    </location>
</feature>
<feature type="topological domain" description="Extracellular" evidence="1">
    <location>
        <begin position="115"/>
        <end position="197"/>
    </location>
</feature>
<feature type="transmembrane region" description="Helical" evidence="1">
    <location>
        <begin position="198"/>
        <end position="218"/>
    </location>
</feature>
<feature type="topological domain" description="Cytoplasmic" evidence="1">
    <location>
        <begin position="219"/>
        <end position="238"/>
    </location>
</feature>
<feature type="glycosylation site" description="N-linked (GlcNAc...) asparagine" evidence="1">
    <location>
        <position position="62"/>
    </location>
</feature>
<feature type="glycosylation site" description="N-linked (GlcNAc...) asparagine" evidence="1">
    <location>
        <position position="143"/>
    </location>
</feature>
<feature type="glycosylation site" description="N-linked (GlcNAc...) asparagine" evidence="1">
    <location>
        <position position="164"/>
    </location>
</feature>
<proteinExistence type="inferred from homology"/>
<comment type="subcellular location">
    <subcellularLocation>
        <location evidence="2">Membrane</location>
        <topology evidence="2">Multi-pass membrane protein</topology>
    </subcellularLocation>
</comment>
<comment type="similarity">
    <text evidence="2">Belongs to the tetraspanin (TM4SF) family.</text>
</comment>
<gene>
    <name type="primary">tspC</name>
    <name type="ORF">DDB_G0270986</name>
</gene>
<organism>
    <name type="scientific">Dictyostelium discoideum</name>
    <name type="common">Social amoeba</name>
    <dbReference type="NCBI Taxonomy" id="44689"/>
    <lineage>
        <taxon>Eukaryota</taxon>
        <taxon>Amoebozoa</taxon>
        <taxon>Evosea</taxon>
        <taxon>Eumycetozoa</taxon>
        <taxon>Dictyostelia</taxon>
        <taxon>Dictyosteliales</taxon>
        <taxon>Dictyosteliaceae</taxon>
        <taxon>Dictyostelium</taxon>
    </lineage>
</organism>
<evidence type="ECO:0000255" key="1"/>
<evidence type="ECO:0000305" key="2"/>
<protein>
    <recommendedName>
        <fullName>Probable tetraspanin tspC</fullName>
    </recommendedName>
</protein>
<sequence length="238" mass="26334">MVNTRDFLPKTTHYLKVPIIGLNAILWLLGLVLIVVGSVCISFFSNFKEFTKESGYKNALSNLTTSAPTGVLVIGIFFILLTLVGCFVAYKEKLVGLVLYTMLMLILLVVLIGIGGKALTLDKEDAVSIIGTSWVQISNSLKNSTITKLEDFLECCCWSESYSNQTYKDLCPKDDDGNIKYEDTYCEGIFTKQVSSKLVLVGIAGVVIGCIEFVAMALSLFLIIRICRSPRSRAYDQY</sequence>
<accession>Q55CV7</accession>
<dbReference type="EMBL" id="AAFI02000005">
    <property type="protein sequence ID" value="EAL72843.2"/>
    <property type="molecule type" value="Genomic_DNA"/>
</dbReference>
<dbReference type="RefSeq" id="XP_646374.2">
    <property type="nucleotide sequence ID" value="XM_641282.2"/>
</dbReference>
<dbReference type="SMR" id="Q55CV7"/>
<dbReference type="FunCoup" id="Q55CV7">
    <property type="interactions" value="7"/>
</dbReference>
<dbReference type="STRING" id="44689.Q55CV7"/>
<dbReference type="GlyCosmos" id="Q55CV7">
    <property type="glycosylation" value="3 sites, No reported glycans"/>
</dbReference>
<dbReference type="GlyGen" id="Q55CV7">
    <property type="glycosylation" value="3 sites"/>
</dbReference>
<dbReference type="PaxDb" id="44689-DDB0252563"/>
<dbReference type="EnsemblProtists" id="EAL72843">
    <property type="protein sequence ID" value="EAL72843"/>
    <property type="gene ID" value="DDB_G0270986"/>
</dbReference>
<dbReference type="GeneID" id="8617329"/>
<dbReference type="KEGG" id="ddi:DDB_G0270986"/>
<dbReference type="dictyBase" id="DDB_G0270986">
    <property type="gene designation" value="tspC"/>
</dbReference>
<dbReference type="VEuPathDB" id="AmoebaDB:DDB_G0270986"/>
<dbReference type="HOGENOM" id="CLU_1182012_0_0_1"/>
<dbReference type="InParanoid" id="Q55CV7"/>
<dbReference type="OMA" id="EDFLECC"/>
<dbReference type="PhylomeDB" id="Q55CV7"/>
<dbReference type="PRO" id="PR:Q55CV7"/>
<dbReference type="Proteomes" id="UP000002195">
    <property type="component" value="Chromosome 1"/>
</dbReference>
<dbReference type="GO" id="GO:0000331">
    <property type="term" value="C:contractile vacuole"/>
    <property type="evidence" value="ECO:0000314"/>
    <property type="project" value="dictyBase"/>
</dbReference>
<dbReference type="GO" id="GO:0016020">
    <property type="term" value="C:membrane"/>
    <property type="evidence" value="ECO:0007669"/>
    <property type="project" value="UniProtKB-SubCell"/>
</dbReference>
<dbReference type="GO" id="GO:0006971">
    <property type="term" value="P:hypotonic response"/>
    <property type="evidence" value="ECO:0000315"/>
    <property type="project" value="dictyBase"/>
</dbReference>
<dbReference type="InterPro" id="IPR018499">
    <property type="entry name" value="Tetraspanin/Peripherin"/>
</dbReference>
<dbReference type="PANTHER" id="PTHR19282">
    <property type="entry name" value="TETRASPANIN"/>
    <property type="match status" value="1"/>
</dbReference>
<dbReference type="PANTHER" id="PTHR19282:SF417">
    <property type="entry name" value="TETRASPANIN TSPA-RELATED"/>
    <property type="match status" value="1"/>
</dbReference>
<dbReference type="Pfam" id="PF00335">
    <property type="entry name" value="Tetraspanin"/>
    <property type="match status" value="1"/>
</dbReference>
<dbReference type="PRINTS" id="PR00259">
    <property type="entry name" value="TMFOUR"/>
</dbReference>